<accession>Q5R541</accession>
<reference key="1">
    <citation type="submission" date="2004-11" db="EMBL/GenBank/DDBJ databases">
        <authorList>
            <consortium name="The German cDNA consortium"/>
        </authorList>
    </citation>
    <scope>NUCLEOTIDE SEQUENCE [LARGE SCALE MRNA]</scope>
    <source>
        <tissue>Liver</tissue>
    </source>
</reference>
<proteinExistence type="evidence at transcript level"/>
<comment type="function">
    <text evidence="1">Could be a regulatory protein, possibly participating in receptor-mediated signal transduction at the plasma membrane. Has guanine nucleotide-binding activity but undetectable intrinsic GTPase activity (By similarity).</text>
</comment>
<comment type="subunit">
    <text evidence="1">Interacts with calmodulin in a Ca(2+)-dependent manner. Binds ROCK1 (By similarity).</text>
</comment>
<comment type="subcellular location">
    <subcellularLocation>
        <location evidence="1">Cell membrane</location>
        <topology evidence="1">Peripheral membrane protein</topology>
        <orientation evidence="1">Cytoplasmic side</orientation>
    </subcellularLocation>
</comment>
<comment type="PTM">
    <text evidence="1">Phosphorylated on tyrosine residues.</text>
</comment>
<comment type="similarity">
    <text evidence="3">Belongs to the small GTPase superfamily. RGK family.</text>
</comment>
<dbReference type="EMBL" id="CR861033">
    <property type="protein sequence ID" value="CAH93125.1"/>
    <property type="molecule type" value="mRNA"/>
</dbReference>
<dbReference type="RefSeq" id="NP_001126848.1">
    <property type="nucleotide sequence ID" value="NM_001133376.1"/>
</dbReference>
<dbReference type="SMR" id="Q5R541"/>
<dbReference type="STRING" id="9601.ENSPPYP00000021031"/>
<dbReference type="GeneID" id="100173856"/>
<dbReference type="KEGG" id="pon:100173856"/>
<dbReference type="CTD" id="2669"/>
<dbReference type="eggNOG" id="KOG0395">
    <property type="taxonomic scope" value="Eukaryota"/>
</dbReference>
<dbReference type="InParanoid" id="Q5R541"/>
<dbReference type="OrthoDB" id="5239715at2759"/>
<dbReference type="Proteomes" id="UP000001595">
    <property type="component" value="Unplaced"/>
</dbReference>
<dbReference type="GO" id="GO:0005886">
    <property type="term" value="C:plasma membrane"/>
    <property type="evidence" value="ECO:0007669"/>
    <property type="project" value="UniProtKB-SubCell"/>
</dbReference>
<dbReference type="GO" id="GO:0005246">
    <property type="term" value="F:calcium channel regulator activity"/>
    <property type="evidence" value="ECO:0007669"/>
    <property type="project" value="TreeGrafter"/>
</dbReference>
<dbReference type="GO" id="GO:0005516">
    <property type="term" value="F:calmodulin binding"/>
    <property type="evidence" value="ECO:0007669"/>
    <property type="project" value="UniProtKB-KW"/>
</dbReference>
<dbReference type="GO" id="GO:0005525">
    <property type="term" value="F:GTP binding"/>
    <property type="evidence" value="ECO:0007669"/>
    <property type="project" value="UniProtKB-KW"/>
</dbReference>
<dbReference type="GO" id="GO:0003924">
    <property type="term" value="F:GTPase activity"/>
    <property type="evidence" value="ECO:0007669"/>
    <property type="project" value="InterPro"/>
</dbReference>
<dbReference type="CDD" id="cd04148">
    <property type="entry name" value="RGK"/>
    <property type="match status" value="1"/>
</dbReference>
<dbReference type="FunFam" id="3.40.50.300:FF:000311">
    <property type="entry name" value="GTP-binding protein RAD"/>
    <property type="match status" value="1"/>
</dbReference>
<dbReference type="Gene3D" id="3.40.50.300">
    <property type="entry name" value="P-loop containing nucleotide triphosphate hydrolases"/>
    <property type="match status" value="1"/>
</dbReference>
<dbReference type="InterPro" id="IPR027417">
    <property type="entry name" value="P-loop_NTPase"/>
</dbReference>
<dbReference type="InterPro" id="IPR017358">
    <property type="entry name" value="RGK"/>
</dbReference>
<dbReference type="InterPro" id="IPR051641">
    <property type="entry name" value="RGK_GTP-binding_reg"/>
</dbReference>
<dbReference type="InterPro" id="IPR005225">
    <property type="entry name" value="Small_GTP-bd"/>
</dbReference>
<dbReference type="InterPro" id="IPR001806">
    <property type="entry name" value="Small_GTPase"/>
</dbReference>
<dbReference type="NCBIfam" id="TIGR00231">
    <property type="entry name" value="small_GTP"/>
    <property type="match status" value="1"/>
</dbReference>
<dbReference type="PANTHER" id="PTHR45775:SF4">
    <property type="entry name" value="GTP-BINDING PROTEIN GEM"/>
    <property type="match status" value="1"/>
</dbReference>
<dbReference type="PANTHER" id="PTHR45775">
    <property type="entry name" value="RAD, GEM/KIR FAMILY MEMBER 2, ISOFORM C"/>
    <property type="match status" value="1"/>
</dbReference>
<dbReference type="Pfam" id="PF00071">
    <property type="entry name" value="Ras"/>
    <property type="match status" value="1"/>
</dbReference>
<dbReference type="PIRSF" id="PIRSF038017">
    <property type="entry name" value="GTP-binding_GEM"/>
    <property type="match status" value="1"/>
</dbReference>
<dbReference type="PRINTS" id="PR00449">
    <property type="entry name" value="RASTRNSFRMNG"/>
</dbReference>
<dbReference type="SMART" id="SM00175">
    <property type="entry name" value="RAB"/>
    <property type="match status" value="1"/>
</dbReference>
<dbReference type="SMART" id="SM00173">
    <property type="entry name" value="RAS"/>
    <property type="match status" value="1"/>
</dbReference>
<dbReference type="SMART" id="SM00174">
    <property type="entry name" value="RHO"/>
    <property type="match status" value="1"/>
</dbReference>
<dbReference type="SUPFAM" id="SSF52540">
    <property type="entry name" value="P-loop containing nucleoside triphosphate hydrolases"/>
    <property type="match status" value="1"/>
</dbReference>
<dbReference type="PROSITE" id="PS51421">
    <property type="entry name" value="RAS"/>
    <property type="match status" value="1"/>
</dbReference>
<evidence type="ECO:0000250" key="1"/>
<evidence type="ECO:0000256" key="2">
    <source>
        <dbReference type="SAM" id="MobiDB-lite"/>
    </source>
</evidence>
<evidence type="ECO:0000305" key="3"/>
<feature type="chain" id="PRO_0000122477" description="GTP-binding protein GEM">
    <location>
        <begin position="1"/>
        <end position="296"/>
    </location>
</feature>
<feature type="region of interest" description="Disordered" evidence="2">
    <location>
        <begin position="1"/>
        <end position="20"/>
    </location>
</feature>
<feature type="region of interest" description="Disordered" evidence="2">
    <location>
        <begin position="37"/>
        <end position="68"/>
    </location>
</feature>
<feature type="region of interest" description="Calmodulin-binding" evidence="1">
    <location>
        <begin position="266"/>
        <end position="285"/>
    </location>
</feature>
<feature type="compositionally biased region" description="Low complexity" evidence="2">
    <location>
        <begin position="57"/>
        <end position="68"/>
    </location>
</feature>
<feature type="binding site" evidence="1">
    <location>
        <begin position="82"/>
        <end position="89"/>
    </location>
    <ligand>
        <name>GTP</name>
        <dbReference type="ChEBI" id="CHEBI:37565"/>
    </ligand>
</feature>
<feature type="binding site" evidence="1">
    <location>
        <begin position="191"/>
        <end position="194"/>
    </location>
    <ligand>
        <name>GTP</name>
        <dbReference type="ChEBI" id="CHEBI:37565"/>
    </ligand>
</feature>
<name>GEM_PONAB</name>
<organism>
    <name type="scientific">Pongo abelii</name>
    <name type="common">Sumatran orangutan</name>
    <name type="synonym">Pongo pygmaeus abelii</name>
    <dbReference type="NCBI Taxonomy" id="9601"/>
    <lineage>
        <taxon>Eukaryota</taxon>
        <taxon>Metazoa</taxon>
        <taxon>Chordata</taxon>
        <taxon>Craniata</taxon>
        <taxon>Vertebrata</taxon>
        <taxon>Euteleostomi</taxon>
        <taxon>Mammalia</taxon>
        <taxon>Eutheria</taxon>
        <taxon>Euarchontoglires</taxon>
        <taxon>Primates</taxon>
        <taxon>Haplorrhini</taxon>
        <taxon>Catarrhini</taxon>
        <taxon>Hominidae</taxon>
        <taxon>Pongo</taxon>
    </lineage>
</organism>
<protein>
    <recommendedName>
        <fullName>GTP-binding protein GEM</fullName>
    </recommendedName>
</protein>
<sequence>MTLNNVTMRQGTVGMQPQQQRWSIPADGRHLMVQKEPHQYSHRNRHSATPEDHCRRSWSSDSTDSVISSESGNTYYRVVLIGEQGVGKSTLANIFAGVHDSMDSDCEVLGEDTYERTLMVDGESATIILLDMWENKGENEWLHDHCMQVGDAYLIVYSITDRASFEKASELRIQLRRARQTEDIPIILVGNKSDLVRCREVSVSEGRTCAVVFDCKFIETSAAVQHNVKELFEGIVRQVRLRRDSKEKNERRLAYQKRKESMPRKARRFWGKIVAKNNKNMAFKLKSKSCHDLSVL</sequence>
<keyword id="KW-0112">Calmodulin-binding</keyword>
<keyword id="KW-1003">Cell membrane</keyword>
<keyword id="KW-0342">GTP-binding</keyword>
<keyword id="KW-0472">Membrane</keyword>
<keyword id="KW-0547">Nucleotide-binding</keyword>
<keyword id="KW-0597">Phosphoprotein</keyword>
<keyword id="KW-1185">Reference proteome</keyword>
<gene>
    <name type="primary">GEM</name>
</gene>